<organism>
    <name type="scientific">Monkeypox virus</name>
    <dbReference type="NCBI Taxonomy" id="10244"/>
    <lineage>
        <taxon>Viruses</taxon>
        <taxon>Varidnaviria</taxon>
        <taxon>Bamfordvirae</taxon>
        <taxon>Nucleocytoviricota</taxon>
        <taxon>Pokkesviricetes</taxon>
        <taxon>Chitovirales</taxon>
        <taxon>Poxviridae</taxon>
        <taxon>Chordopoxvirinae</taxon>
        <taxon>Orthopoxvirus</taxon>
    </lineage>
</organism>
<name>DUT_MONPV</name>
<accession>A0A7H0DN19</accession>
<comment type="function">
    <text evidence="1">This enzyme is involved in nucleotide metabolism: it produces dUMP, the immediate precursor of thymidine nucleotides and it decreases the intracellular concentration of dUTP so that uracil cannot be incorporated into DNA.</text>
</comment>
<comment type="catalytic activity">
    <reaction evidence="1">
        <text>dUTP + H2O = dUMP + diphosphate + H(+)</text>
        <dbReference type="Rhea" id="RHEA:10248"/>
        <dbReference type="ChEBI" id="CHEBI:15377"/>
        <dbReference type="ChEBI" id="CHEBI:15378"/>
        <dbReference type="ChEBI" id="CHEBI:33019"/>
        <dbReference type="ChEBI" id="CHEBI:61555"/>
        <dbReference type="ChEBI" id="CHEBI:246422"/>
        <dbReference type="EC" id="3.6.1.23"/>
    </reaction>
    <physiologicalReaction direction="left-to-right" evidence="1">
        <dbReference type="Rhea" id="RHEA:10249"/>
    </physiologicalReaction>
</comment>
<comment type="cofactor">
    <cofactor evidence="1">
        <name>Mg(2+)</name>
        <dbReference type="ChEBI" id="CHEBI:18420"/>
    </cofactor>
</comment>
<comment type="induction">
    <text evidence="1">Expressed in the early phase of the viral replicative cycle.</text>
</comment>
<comment type="similarity">
    <text evidence="2">Belongs to the dUTPase family.</text>
</comment>
<keyword id="KW-0244">Early protein</keyword>
<keyword id="KW-0378">Hydrolase</keyword>
<keyword id="KW-0460">Magnesium</keyword>
<keyword id="KW-0479">Metal-binding</keyword>
<keyword id="KW-0546">Nucleotide metabolism</keyword>
<keyword id="KW-1185">Reference proteome</keyword>
<gene>
    <name type="primary">OPG046</name>
    <name type="ORF">MPXVgp034</name>
</gene>
<organismHost>
    <name type="scientific">Cynomys gunnisoni</name>
    <name type="common">Gunnison's prairie dog</name>
    <name type="synonym">Spermophilus gunnisoni</name>
    <dbReference type="NCBI Taxonomy" id="45479"/>
</organismHost>
<organismHost>
    <name type="scientific">Cynomys leucurus</name>
    <name type="common">White-tailed prairie dog</name>
    <dbReference type="NCBI Taxonomy" id="99825"/>
</organismHost>
<organismHost>
    <name type="scientific">Cynomys ludovicianus</name>
    <name type="common">Black-tailed prairie dog</name>
    <dbReference type="NCBI Taxonomy" id="45480"/>
</organismHost>
<organismHost>
    <name type="scientific">Cynomys mexicanus</name>
    <name type="common">Mexican prairie dog</name>
    <dbReference type="NCBI Taxonomy" id="99826"/>
</organismHost>
<organismHost>
    <name type="scientific">Cynomys parvidens</name>
    <name type="common">Utah prairie dog</name>
    <dbReference type="NCBI Taxonomy" id="99827"/>
</organismHost>
<organismHost>
    <name type="scientific">Gliridae</name>
    <name type="common">dormice</name>
    <dbReference type="NCBI Taxonomy" id="30650"/>
</organismHost>
<organismHost>
    <name type="scientific">Heliosciurus ruwenzorii</name>
    <name type="common">Ruwenzori sun squirrel</name>
    <dbReference type="NCBI Taxonomy" id="226685"/>
</organismHost>
<organismHost>
    <name type="scientific">Homo sapiens</name>
    <name type="common">Human</name>
    <dbReference type="NCBI Taxonomy" id="9606"/>
</organismHost>
<organismHost>
    <name type="scientific">Mus musculus</name>
    <name type="common">Mouse</name>
    <dbReference type="NCBI Taxonomy" id="10090"/>
</organismHost>
<feature type="chain" id="PRO_0000457636" description="Deoxyuridine 5'-triphosphate nucleotidohydrolase">
    <location>
        <begin position="1"/>
        <end position="151"/>
    </location>
</feature>
<feature type="binding site" evidence="1">
    <location>
        <position position="28"/>
    </location>
    <ligand>
        <name>Mg(2+)</name>
        <dbReference type="ChEBI" id="CHEBI:18420"/>
    </ligand>
</feature>
<feature type="binding site" evidence="1">
    <location>
        <begin position="72"/>
        <end position="74"/>
    </location>
    <ligand>
        <name>dUTP</name>
        <dbReference type="ChEBI" id="CHEBI:61555"/>
    </ligand>
</feature>
<feature type="binding site" evidence="1">
    <location>
        <begin position="86"/>
        <end position="89"/>
    </location>
    <ligand>
        <name>dUTP</name>
        <dbReference type="ChEBI" id="CHEBI:61555"/>
    </ligand>
</feature>
<feature type="binding site" evidence="1">
    <location>
        <position position="92"/>
    </location>
    <ligand>
        <name>dUTP</name>
        <dbReference type="ChEBI" id="CHEBI:61555"/>
    </ligand>
</feature>
<feature type="binding site" evidence="1">
    <location>
        <position position="97"/>
    </location>
    <ligand>
        <name>dUTP</name>
        <dbReference type="ChEBI" id="CHEBI:61555"/>
    </ligand>
</feature>
<feature type="binding site" evidence="1">
    <location>
        <position position="99"/>
    </location>
    <ligand>
        <name>dUTP</name>
        <dbReference type="ChEBI" id="CHEBI:61555"/>
    </ligand>
</feature>
<feature type="binding site" evidence="1">
    <location>
        <position position="115"/>
    </location>
    <ligand>
        <name>dUTP</name>
        <dbReference type="ChEBI" id="CHEBI:61555"/>
    </ligand>
</feature>
<dbReference type="EC" id="3.6.1.23"/>
<dbReference type="EMBL" id="MT903340">
    <property type="protein sequence ID" value="QNP12902.1"/>
    <property type="molecule type" value="Genomic_DNA"/>
</dbReference>
<dbReference type="RefSeq" id="YP_010377029.1">
    <property type="nucleotide sequence ID" value="NC_063383.1"/>
</dbReference>
<dbReference type="SMR" id="A0A7H0DN19"/>
<dbReference type="GeneID" id="72551442"/>
<dbReference type="Proteomes" id="UP000516359">
    <property type="component" value="Genome"/>
</dbReference>
<dbReference type="GO" id="GO:0004170">
    <property type="term" value="F:dUTP diphosphatase activity"/>
    <property type="evidence" value="ECO:0007669"/>
    <property type="project" value="InterPro"/>
</dbReference>
<dbReference type="GO" id="GO:0000287">
    <property type="term" value="F:magnesium ion binding"/>
    <property type="evidence" value="ECO:0007669"/>
    <property type="project" value="InterPro"/>
</dbReference>
<dbReference type="GO" id="GO:0006226">
    <property type="term" value="P:dUMP biosynthetic process"/>
    <property type="evidence" value="ECO:0007669"/>
    <property type="project" value="InterPro"/>
</dbReference>
<dbReference type="GO" id="GO:0046081">
    <property type="term" value="P:dUTP catabolic process"/>
    <property type="evidence" value="ECO:0007669"/>
    <property type="project" value="InterPro"/>
</dbReference>
<dbReference type="CDD" id="cd07557">
    <property type="entry name" value="trimeric_dUTPase"/>
    <property type="match status" value="1"/>
</dbReference>
<dbReference type="Gene3D" id="2.70.40.10">
    <property type="match status" value="1"/>
</dbReference>
<dbReference type="InterPro" id="IPR008181">
    <property type="entry name" value="dUTPase"/>
</dbReference>
<dbReference type="InterPro" id="IPR029054">
    <property type="entry name" value="dUTPase-like"/>
</dbReference>
<dbReference type="InterPro" id="IPR036157">
    <property type="entry name" value="dUTPase-like_sf"/>
</dbReference>
<dbReference type="InterPro" id="IPR033704">
    <property type="entry name" value="dUTPase_trimeric"/>
</dbReference>
<dbReference type="NCBIfam" id="TIGR00576">
    <property type="entry name" value="dut"/>
    <property type="match status" value="1"/>
</dbReference>
<dbReference type="NCBIfam" id="NF001862">
    <property type="entry name" value="PRK00601.1"/>
    <property type="match status" value="1"/>
</dbReference>
<dbReference type="PANTHER" id="PTHR11241">
    <property type="entry name" value="DEOXYURIDINE 5'-TRIPHOSPHATE NUCLEOTIDOHYDROLASE"/>
    <property type="match status" value="1"/>
</dbReference>
<dbReference type="PANTHER" id="PTHR11241:SF0">
    <property type="entry name" value="DEOXYURIDINE 5'-TRIPHOSPHATE NUCLEOTIDOHYDROLASE"/>
    <property type="match status" value="1"/>
</dbReference>
<dbReference type="Pfam" id="PF00692">
    <property type="entry name" value="dUTPase"/>
    <property type="match status" value="1"/>
</dbReference>
<dbReference type="SUPFAM" id="SSF51283">
    <property type="entry name" value="dUTPase-like"/>
    <property type="match status" value="1"/>
</dbReference>
<evidence type="ECO:0000250" key="1">
    <source>
        <dbReference type="UniProtKB" id="P17374"/>
    </source>
</evidence>
<evidence type="ECO:0000305" key="2"/>
<sequence>MIFFMFNMNINSPVRFVKETNRAKSPTRQSPGAAGYDLYSAYDYTIPPGERQLIKTDISMSMPKFCYGRIAPRSGLSLKGIDIGGGVIDEDYRGSIGVILINNGKCTFNVNTGDRIAQLIYQRIYYPELEEVQSLDSTDRGDQGFGSTGLR</sequence>
<reference key="1">
    <citation type="journal article" date="2022" name="J. Infect. Dis.">
        <title>Exportation of Monkeypox virus from the African continent.</title>
        <authorList>
            <person name="Mauldin M.R."/>
            <person name="McCollum A.M."/>
            <person name="Nakazawa Y.J."/>
            <person name="Mandra A."/>
            <person name="Whitehouse E.R."/>
            <person name="Davidson W."/>
            <person name="Zhao H."/>
            <person name="Gao J."/>
            <person name="Li Y."/>
            <person name="Doty J."/>
            <person name="Yinka-Ogunleye A."/>
            <person name="Akinpelu A."/>
            <person name="Aruna O."/>
            <person name="Naidoo D."/>
            <person name="Lewandowski K."/>
            <person name="Afrough B."/>
            <person name="Graham V."/>
            <person name="Aarons E."/>
            <person name="Hewson R."/>
            <person name="Vipond R."/>
            <person name="Dunning J."/>
            <person name="Chand M."/>
            <person name="Brown C."/>
            <person name="Cohen-Gihon I."/>
            <person name="Erez N."/>
            <person name="Shifman O."/>
            <person name="Israeli O."/>
            <person name="Sharon M."/>
            <person name="Schwartz E."/>
            <person name="Beth-Din A."/>
            <person name="Zvi A."/>
            <person name="Mak T.M."/>
            <person name="Ng Y.K."/>
            <person name="Cui L."/>
            <person name="Lin R.T.P."/>
            <person name="Olson V.A."/>
            <person name="Brooks T."/>
            <person name="Paran N."/>
            <person name="Ihekweazu C."/>
            <person name="Reynolds M.G."/>
        </authorList>
    </citation>
    <scope>NUCLEOTIDE SEQUENCE [LARGE SCALE GENOMIC DNA]</scope>
</reference>
<proteinExistence type="inferred from homology"/>
<protein>
    <recommendedName>
        <fullName>Deoxyuridine 5'-triphosphate nucleotidohydrolase</fullName>
        <shortName>dUTPase</shortName>
        <ecNumber>3.6.1.23</ecNumber>
    </recommendedName>
    <alternativeName>
        <fullName>dUTP pyrophosphatase</fullName>
    </alternativeName>
</protein>